<gene>
    <name type="primary">LYS1</name>
    <name type="ordered locus">CAGL0F06875g</name>
</gene>
<name>LYS1_CANGA</name>
<evidence type="ECO:0000250" key="1">
    <source>
        <dbReference type="UniProtKB" id="P38998"/>
    </source>
</evidence>
<evidence type="ECO:0000255" key="2"/>
<evidence type="ECO:0000305" key="3"/>
<sequence>MSVTLHLRGETKPLEHRAALTPTTVKHLIGKGFKIYVEESPQSIFKIDEYRRAGAIIVPFGSWISAPRDRIIIGLKEMPEEDKFPLVHEHIQFAHCYKDQAGWKDVLRRFINGNGTLYDLEFLEDDNGRRVAAFGFYAGFAGAALGLADWAFKQTHKDSEDLPAVSPYPNEKALIKDIGKAYKNALKTGAKKPKVLIIGALGRCGSGAIDFLKKVGLPEENIIKWDIQETSRGGPFPEIAASDIFINCIYLSKPIAPFINYELLNKPDRKLRTVVDVSADTTNPHNPIPIYNIATVFNKPTVKVNTSSGPKLSVISIDHLPSLLPREASEFFAHDLLPSLEQLPSRHVSPVWVRAEKLFNRHSARAIRESKL</sequence>
<reference key="1">
    <citation type="journal article" date="2004" name="Nature">
        <title>Genome evolution in yeasts.</title>
        <authorList>
            <person name="Dujon B."/>
            <person name="Sherman D."/>
            <person name="Fischer G."/>
            <person name="Durrens P."/>
            <person name="Casaregola S."/>
            <person name="Lafontaine I."/>
            <person name="de Montigny J."/>
            <person name="Marck C."/>
            <person name="Neuveglise C."/>
            <person name="Talla E."/>
            <person name="Goffard N."/>
            <person name="Frangeul L."/>
            <person name="Aigle M."/>
            <person name="Anthouard V."/>
            <person name="Babour A."/>
            <person name="Barbe V."/>
            <person name="Barnay S."/>
            <person name="Blanchin S."/>
            <person name="Beckerich J.-M."/>
            <person name="Beyne E."/>
            <person name="Bleykasten C."/>
            <person name="Boisrame A."/>
            <person name="Boyer J."/>
            <person name="Cattolico L."/>
            <person name="Confanioleri F."/>
            <person name="de Daruvar A."/>
            <person name="Despons L."/>
            <person name="Fabre E."/>
            <person name="Fairhead C."/>
            <person name="Ferry-Dumazet H."/>
            <person name="Groppi A."/>
            <person name="Hantraye F."/>
            <person name="Hennequin C."/>
            <person name="Jauniaux N."/>
            <person name="Joyet P."/>
            <person name="Kachouri R."/>
            <person name="Kerrest A."/>
            <person name="Koszul R."/>
            <person name="Lemaire M."/>
            <person name="Lesur I."/>
            <person name="Ma L."/>
            <person name="Muller H."/>
            <person name="Nicaud J.-M."/>
            <person name="Nikolski M."/>
            <person name="Oztas S."/>
            <person name="Ozier-Kalogeropoulos O."/>
            <person name="Pellenz S."/>
            <person name="Potier S."/>
            <person name="Richard G.-F."/>
            <person name="Straub M.-L."/>
            <person name="Suleau A."/>
            <person name="Swennen D."/>
            <person name="Tekaia F."/>
            <person name="Wesolowski-Louvel M."/>
            <person name="Westhof E."/>
            <person name="Wirth B."/>
            <person name="Zeniou-Meyer M."/>
            <person name="Zivanovic Y."/>
            <person name="Bolotin-Fukuhara M."/>
            <person name="Thierry A."/>
            <person name="Bouchier C."/>
            <person name="Caudron B."/>
            <person name="Scarpelli C."/>
            <person name="Gaillardin C."/>
            <person name="Weissenbach J."/>
            <person name="Wincker P."/>
            <person name="Souciet J.-L."/>
        </authorList>
    </citation>
    <scope>NUCLEOTIDE SEQUENCE [LARGE SCALE GENOMIC DNA]</scope>
    <source>
        <strain>ATCC 2001 / BCRC 20586 / JCM 3761 / NBRC 0622 / NRRL Y-65 / CBS 138</strain>
    </source>
</reference>
<keyword id="KW-0028">Amino-acid biosynthesis</keyword>
<keyword id="KW-1015">Disulfide bond</keyword>
<keyword id="KW-0457">Lysine biosynthesis</keyword>
<keyword id="KW-0520">NAD</keyword>
<keyword id="KW-0560">Oxidoreductase</keyword>
<keyword id="KW-0576">Peroxisome</keyword>
<keyword id="KW-1185">Reference proteome</keyword>
<feature type="chain" id="PRO_0000199011" description="Saccharopine dehydrogenase [NAD(+), L-lysine-forming]">
    <location>
        <begin position="1"/>
        <end position="372"/>
    </location>
</feature>
<feature type="short sequence motif" description="Microbody targeting signal" evidence="2">
    <location>
        <begin position="370"/>
        <end position="372"/>
    </location>
</feature>
<feature type="active site" description="Proton acceptor" evidence="1">
    <location>
        <position position="76"/>
    </location>
</feature>
<feature type="active site" description="Proton donor" evidence="1">
    <location>
        <position position="95"/>
    </location>
</feature>
<feature type="binding site" evidence="1">
    <location>
        <position position="17"/>
    </location>
    <ligand>
        <name>L-saccharopine</name>
        <dbReference type="ChEBI" id="CHEBI:57951"/>
    </ligand>
</feature>
<feature type="binding site" evidence="1">
    <location>
        <position position="76"/>
    </location>
    <ligand>
        <name>L-saccharopine</name>
        <dbReference type="ChEBI" id="CHEBI:57951"/>
    </ligand>
</feature>
<feature type="binding site" evidence="1">
    <location>
        <position position="100"/>
    </location>
    <ligand>
        <name>L-saccharopine</name>
        <dbReference type="ChEBI" id="CHEBI:57951"/>
    </ligand>
</feature>
<feature type="binding site" evidence="1">
    <location>
        <position position="129"/>
    </location>
    <ligand>
        <name>NAD(+)</name>
        <dbReference type="ChEBI" id="CHEBI:57540"/>
    </ligand>
</feature>
<feature type="binding site" evidence="1">
    <location>
        <position position="130"/>
    </location>
    <ligand>
        <name>L-saccharopine</name>
        <dbReference type="ChEBI" id="CHEBI:57951"/>
    </ligand>
</feature>
<feature type="binding site" evidence="1">
    <location>
        <position position="134"/>
    </location>
    <ligand>
        <name>L-saccharopine</name>
        <dbReference type="ChEBI" id="CHEBI:57951"/>
    </ligand>
</feature>
<feature type="binding site" evidence="1">
    <location>
        <begin position="202"/>
        <end position="203"/>
    </location>
    <ligand>
        <name>NAD(+)</name>
        <dbReference type="ChEBI" id="CHEBI:57540"/>
    </ligand>
</feature>
<feature type="binding site" evidence="1">
    <location>
        <position position="226"/>
    </location>
    <ligand>
        <name>NAD(+)</name>
        <dbReference type="ChEBI" id="CHEBI:57540"/>
    </ligand>
</feature>
<feature type="binding site" evidence="1">
    <location>
        <position position="230"/>
    </location>
    <ligand>
        <name>NAD(+)</name>
        <dbReference type="ChEBI" id="CHEBI:57540"/>
    </ligand>
</feature>
<feature type="binding site" evidence="1">
    <location>
        <position position="250"/>
    </location>
    <ligand>
        <name>NAD(+)</name>
        <dbReference type="ChEBI" id="CHEBI:57540"/>
    </ligand>
</feature>
<feature type="binding site" evidence="1">
    <location>
        <position position="277"/>
    </location>
    <ligand>
        <name>NAD(+)</name>
        <dbReference type="ChEBI" id="CHEBI:57540"/>
    </ligand>
</feature>
<feature type="binding site" evidence="1">
    <location>
        <begin position="278"/>
        <end position="280"/>
    </location>
    <ligand>
        <name>L-saccharopine</name>
        <dbReference type="ChEBI" id="CHEBI:57951"/>
    </ligand>
</feature>
<feature type="binding site" evidence="1">
    <location>
        <begin position="317"/>
        <end position="320"/>
    </location>
    <ligand>
        <name>NAD(+)</name>
        <dbReference type="ChEBI" id="CHEBI:57540"/>
    </ligand>
</feature>
<feature type="disulfide bond" evidence="1">
    <location>
        <begin position="204"/>
        <end position="248"/>
    </location>
</feature>
<accession>Q6FU27</accession>
<proteinExistence type="inferred from homology"/>
<protein>
    <recommendedName>
        <fullName>Saccharopine dehydrogenase [NAD(+), L-lysine-forming]</fullName>
        <shortName>SDH</shortName>
        <ecNumber>1.5.1.7</ecNumber>
    </recommendedName>
    <alternativeName>
        <fullName>Lysine--2-oxoglutarate reductase</fullName>
    </alternativeName>
</protein>
<comment type="function">
    <text evidence="1">Catalyzes the NAD(+)-dependent cleavage of saccharopine to L-lysine and 2-oxoglutarate, the final step in the alpha-aminoadipate (AAA) pathway for lysin biosynthesis.</text>
</comment>
<comment type="catalytic activity">
    <reaction evidence="1">
        <text>L-saccharopine + NAD(+) + H2O = L-lysine + 2-oxoglutarate + NADH + H(+)</text>
        <dbReference type="Rhea" id="RHEA:12440"/>
        <dbReference type="ChEBI" id="CHEBI:15377"/>
        <dbReference type="ChEBI" id="CHEBI:15378"/>
        <dbReference type="ChEBI" id="CHEBI:16810"/>
        <dbReference type="ChEBI" id="CHEBI:32551"/>
        <dbReference type="ChEBI" id="CHEBI:57540"/>
        <dbReference type="ChEBI" id="CHEBI:57945"/>
        <dbReference type="ChEBI" id="CHEBI:57951"/>
        <dbReference type="EC" id="1.5.1.7"/>
    </reaction>
</comment>
<comment type="pathway">
    <text evidence="1">Amino-acid biosynthesis; L-lysine biosynthesis via AAA pathway; L-lysine from L-alpha-aminoadipate (fungal route): step 3/3.</text>
</comment>
<comment type="subunit">
    <text evidence="1">Monomer.</text>
</comment>
<comment type="subcellular location">
    <subcellularLocation>
        <location evidence="1">Peroxisome</location>
    </subcellularLocation>
</comment>
<comment type="similarity">
    <text evidence="3">Belongs to the AlaDH/PNT family.</text>
</comment>
<dbReference type="EC" id="1.5.1.7"/>
<dbReference type="EMBL" id="CR380952">
    <property type="protein sequence ID" value="CAG59191.1"/>
    <property type="molecule type" value="Genomic_DNA"/>
</dbReference>
<dbReference type="RefSeq" id="XP_446267.1">
    <property type="nucleotide sequence ID" value="XM_446267.1"/>
</dbReference>
<dbReference type="SMR" id="Q6FU27"/>
<dbReference type="FunCoup" id="Q6FU27">
    <property type="interactions" value="221"/>
</dbReference>
<dbReference type="STRING" id="284593.Q6FU27"/>
<dbReference type="EnsemblFungi" id="CAGL0F06875g-T">
    <property type="protein sequence ID" value="CAGL0F06875g-T-p1"/>
    <property type="gene ID" value="CAGL0F06875g"/>
</dbReference>
<dbReference type="KEGG" id="cgr:2887663"/>
<dbReference type="CGD" id="CAL0130944">
    <property type="gene designation" value="CAGL0F06875g"/>
</dbReference>
<dbReference type="VEuPathDB" id="FungiDB:CAGL0F06875g"/>
<dbReference type="eggNOG" id="KOG0172">
    <property type="taxonomic scope" value="Eukaryota"/>
</dbReference>
<dbReference type="HOGENOM" id="CLU_063085_0_0_1"/>
<dbReference type="InParanoid" id="Q6FU27"/>
<dbReference type="OMA" id="YFFFSHT"/>
<dbReference type="UniPathway" id="UPA00033">
    <property type="reaction ID" value="UER00034"/>
</dbReference>
<dbReference type="Proteomes" id="UP000002428">
    <property type="component" value="Chromosome F"/>
</dbReference>
<dbReference type="GO" id="GO:0005777">
    <property type="term" value="C:peroxisome"/>
    <property type="evidence" value="ECO:0007669"/>
    <property type="project" value="UniProtKB-SubCell"/>
</dbReference>
<dbReference type="GO" id="GO:0003729">
    <property type="term" value="F:mRNA binding"/>
    <property type="evidence" value="ECO:0007669"/>
    <property type="project" value="EnsemblFungi"/>
</dbReference>
<dbReference type="GO" id="GO:0004754">
    <property type="term" value="F:saccharopine dehydrogenase (NAD+, L-lysine-forming) activity"/>
    <property type="evidence" value="ECO:0007669"/>
    <property type="project" value="UniProtKB-EC"/>
</dbReference>
<dbReference type="GO" id="GO:0019878">
    <property type="term" value="P:lysine biosynthetic process via aminoadipic acid"/>
    <property type="evidence" value="ECO:0007669"/>
    <property type="project" value="UniProtKB-UniPathway"/>
</dbReference>
<dbReference type="GO" id="GO:0016558">
    <property type="term" value="P:protein import into peroxisome matrix"/>
    <property type="evidence" value="ECO:0007669"/>
    <property type="project" value="EnsemblFungi"/>
</dbReference>
<dbReference type="CDD" id="cd12188">
    <property type="entry name" value="SDH"/>
    <property type="match status" value="1"/>
</dbReference>
<dbReference type="FunFam" id="3.40.50.720:FF:000217">
    <property type="entry name" value="Saccharopine dehydrogenase [NAD(+), L-lysine-forming]"/>
    <property type="match status" value="1"/>
</dbReference>
<dbReference type="FunFam" id="3.40.50.720:FF:000423">
    <property type="entry name" value="Saccharopine dehydrogenase [NAD(+), L-lysine-forming]"/>
    <property type="match status" value="1"/>
</dbReference>
<dbReference type="Gene3D" id="3.40.50.720">
    <property type="entry name" value="NAD(P)-binding Rossmann-like Domain"/>
    <property type="match status" value="1"/>
</dbReference>
<dbReference type="InterPro" id="IPR051168">
    <property type="entry name" value="AASS"/>
</dbReference>
<dbReference type="InterPro" id="IPR007886">
    <property type="entry name" value="AlaDH/PNT_N"/>
</dbReference>
<dbReference type="InterPro" id="IPR007698">
    <property type="entry name" value="AlaDH/PNT_NAD(H)-bd"/>
</dbReference>
<dbReference type="InterPro" id="IPR027281">
    <property type="entry name" value="Lys1"/>
</dbReference>
<dbReference type="InterPro" id="IPR036291">
    <property type="entry name" value="NAD(P)-bd_dom_sf"/>
</dbReference>
<dbReference type="PANTHER" id="PTHR11133">
    <property type="entry name" value="SACCHAROPINE DEHYDROGENASE"/>
    <property type="match status" value="1"/>
</dbReference>
<dbReference type="PANTHER" id="PTHR11133:SF23">
    <property type="entry name" value="SACCHAROPINE DEHYDROGENASE [NAD(+), L-LYSINE-FORMING]"/>
    <property type="match status" value="1"/>
</dbReference>
<dbReference type="Pfam" id="PF05222">
    <property type="entry name" value="AlaDh_PNT_N"/>
    <property type="match status" value="1"/>
</dbReference>
<dbReference type="PIRSF" id="PIRSF018250">
    <property type="entry name" value="Saccharopine_DH_Lys"/>
    <property type="match status" value="1"/>
</dbReference>
<dbReference type="SMART" id="SM01002">
    <property type="entry name" value="AlaDh_PNT_C"/>
    <property type="match status" value="1"/>
</dbReference>
<dbReference type="SMART" id="SM01003">
    <property type="entry name" value="AlaDh_PNT_N"/>
    <property type="match status" value="1"/>
</dbReference>
<dbReference type="SUPFAM" id="SSF52283">
    <property type="entry name" value="Formate/glycerate dehydrogenase catalytic domain-like"/>
    <property type="match status" value="1"/>
</dbReference>
<dbReference type="SUPFAM" id="SSF51735">
    <property type="entry name" value="NAD(P)-binding Rossmann-fold domains"/>
    <property type="match status" value="1"/>
</dbReference>
<organism>
    <name type="scientific">Candida glabrata (strain ATCC 2001 / BCRC 20586 / JCM 3761 / NBRC 0622 / NRRL Y-65 / CBS 138)</name>
    <name type="common">Yeast</name>
    <name type="synonym">Nakaseomyces glabratus</name>
    <dbReference type="NCBI Taxonomy" id="284593"/>
    <lineage>
        <taxon>Eukaryota</taxon>
        <taxon>Fungi</taxon>
        <taxon>Dikarya</taxon>
        <taxon>Ascomycota</taxon>
        <taxon>Saccharomycotina</taxon>
        <taxon>Saccharomycetes</taxon>
        <taxon>Saccharomycetales</taxon>
        <taxon>Saccharomycetaceae</taxon>
        <taxon>Nakaseomyces</taxon>
    </lineage>
</organism>